<proteinExistence type="inferred from homology"/>
<name>CYB_PSECU</name>
<keyword id="KW-0249">Electron transport</keyword>
<keyword id="KW-0349">Heme</keyword>
<keyword id="KW-0408">Iron</keyword>
<keyword id="KW-0472">Membrane</keyword>
<keyword id="KW-0479">Metal-binding</keyword>
<keyword id="KW-0496">Mitochondrion</keyword>
<keyword id="KW-0999">Mitochondrion inner membrane</keyword>
<keyword id="KW-0679">Respiratory chain</keyword>
<keyword id="KW-0812">Transmembrane</keyword>
<keyword id="KW-1133">Transmembrane helix</keyword>
<keyword id="KW-0813">Transport</keyword>
<keyword id="KW-0830">Ubiquinone</keyword>
<evidence type="ECO:0000250" key="1"/>
<evidence type="ECO:0000250" key="2">
    <source>
        <dbReference type="UniProtKB" id="P00157"/>
    </source>
</evidence>
<evidence type="ECO:0000255" key="3">
    <source>
        <dbReference type="PROSITE-ProRule" id="PRU00967"/>
    </source>
</evidence>
<evidence type="ECO:0000255" key="4">
    <source>
        <dbReference type="PROSITE-ProRule" id="PRU00968"/>
    </source>
</evidence>
<geneLocation type="mitochondrion"/>
<feature type="chain" id="PRO_0000061449" description="Cytochrome b">
    <location>
        <begin position="1"/>
        <end position="379"/>
    </location>
</feature>
<feature type="transmembrane region" description="Helical" evidence="2">
    <location>
        <begin position="33"/>
        <end position="53"/>
    </location>
</feature>
<feature type="transmembrane region" description="Helical" evidence="2">
    <location>
        <begin position="77"/>
        <end position="98"/>
    </location>
</feature>
<feature type="transmembrane region" description="Helical" evidence="2">
    <location>
        <begin position="113"/>
        <end position="133"/>
    </location>
</feature>
<feature type="transmembrane region" description="Helical" evidence="2">
    <location>
        <begin position="178"/>
        <end position="198"/>
    </location>
</feature>
<feature type="transmembrane region" description="Helical" evidence="2">
    <location>
        <begin position="226"/>
        <end position="246"/>
    </location>
</feature>
<feature type="transmembrane region" description="Helical" evidence="2">
    <location>
        <begin position="288"/>
        <end position="308"/>
    </location>
</feature>
<feature type="transmembrane region" description="Helical" evidence="2">
    <location>
        <begin position="320"/>
        <end position="340"/>
    </location>
</feature>
<feature type="transmembrane region" description="Helical" evidence="2">
    <location>
        <begin position="347"/>
        <end position="367"/>
    </location>
</feature>
<feature type="binding site" description="axial binding residue" evidence="2">
    <location>
        <position position="83"/>
    </location>
    <ligand>
        <name>heme b</name>
        <dbReference type="ChEBI" id="CHEBI:60344"/>
        <label>b562</label>
    </ligand>
    <ligandPart>
        <name>Fe</name>
        <dbReference type="ChEBI" id="CHEBI:18248"/>
    </ligandPart>
</feature>
<feature type="binding site" description="axial binding residue" evidence="2">
    <location>
        <position position="97"/>
    </location>
    <ligand>
        <name>heme b</name>
        <dbReference type="ChEBI" id="CHEBI:60344"/>
        <label>b566</label>
    </ligand>
    <ligandPart>
        <name>Fe</name>
        <dbReference type="ChEBI" id="CHEBI:18248"/>
    </ligandPart>
</feature>
<feature type="binding site" description="axial binding residue" evidence="2">
    <location>
        <position position="182"/>
    </location>
    <ligand>
        <name>heme b</name>
        <dbReference type="ChEBI" id="CHEBI:60344"/>
        <label>b562</label>
    </ligand>
    <ligandPart>
        <name>Fe</name>
        <dbReference type="ChEBI" id="CHEBI:18248"/>
    </ligandPart>
</feature>
<feature type="binding site" description="axial binding residue" evidence="2">
    <location>
        <position position="196"/>
    </location>
    <ligand>
        <name>heme b</name>
        <dbReference type="ChEBI" id="CHEBI:60344"/>
        <label>b566</label>
    </ligand>
    <ligandPart>
        <name>Fe</name>
        <dbReference type="ChEBI" id="CHEBI:18248"/>
    </ligandPart>
</feature>
<feature type="binding site" evidence="2">
    <location>
        <position position="201"/>
    </location>
    <ligand>
        <name>a ubiquinone</name>
        <dbReference type="ChEBI" id="CHEBI:16389"/>
    </ligand>
</feature>
<sequence>MINLRKTHPLMKIINHSFIDLPTPSNISAWWNFGSLLGFSLMIQILTGLFLAMHYIPDTTVAFSSVAHICRDVNYGWLIRNLHANGASMFFACLFLHIGRGIYYGSYLYKETWNIGVILLLTVMATASMGYVLPWGQMSFWGATVITNLLSAIPYIGTTLVEWIWGGFSVDKATLTRFFALHFILPFMIAALTIVHLLFLHETGSNNPLGINPNSDKIPFHPYYTTKDALGLMFLLTILLLLSLLSPDTLSDPDNFSQANPLKHSPHIKPEWYFLFAYAILRSIPNKLGGVLALLASILILLIMPLLHTSKQRSLMFRPISQTLFWLLVTNLLVLTWIGAQPVEQPYIMIGQVMSITYFLLIIVFMPLANSFENHMLKP</sequence>
<organism>
    <name type="scientific">Pseudochirops cupreus</name>
    <name type="common">Coppery ringtail</name>
    <dbReference type="NCBI Taxonomy" id="37702"/>
    <lineage>
        <taxon>Eukaryota</taxon>
        <taxon>Metazoa</taxon>
        <taxon>Chordata</taxon>
        <taxon>Craniata</taxon>
        <taxon>Vertebrata</taxon>
        <taxon>Euteleostomi</taxon>
        <taxon>Mammalia</taxon>
        <taxon>Metatheria</taxon>
        <taxon>Diprotodontia</taxon>
        <taxon>Pseudocheiridae</taxon>
        <taxon>Pseudochirops</taxon>
    </lineage>
</organism>
<dbReference type="EMBL" id="AF102813">
    <property type="protein sequence ID" value="AAD16870.1"/>
    <property type="molecule type" value="Genomic_DNA"/>
</dbReference>
<dbReference type="SMR" id="Q9ZY49"/>
<dbReference type="GO" id="GO:0005743">
    <property type="term" value="C:mitochondrial inner membrane"/>
    <property type="evidence" value="ECO:0007669"/>
    <property type="project" value="UniProtKB-SubCell"/>
</dbReference>
<dbReference type="GO" id="GO:0045275">
    <property type="term" value="C:respiratory chain complex III"/>
    <property type="evidence" value="ECO:0007669"/>
    <property type="project" value="InterPro"/>
</dbReference>
<dbReference type="GO" id="GO:0046872">
    <property type="term" value="F:metal ion binding"/>
    <property type="evidence" value="ECO:0007669"/>
    <property type="project" value="UniProtKB-KW"/>
</dbReference>
<dbReference type="GO" id="GO:0008121">
    <property type="term" value="F:ubiquinol-cytochrome-c reductase activity"/>
    <property type="evidence" value="ECO:0007669"/>
    <property type="project" value="InterPro"/>
</dbReference>
<dbReference type="GO" id="GO:0006122">
    <property type="term" value="P:mitochondrial electron transport, ubiquinol to cytochrome c"/>
    <property type="evidence" value="ECO:0007669"/>
    <property type="project" value="TreeGrafter"/>
</dbReference>
<dbReference type="CDD" id="cd00290">
    <property type="entry name" value="cytochrome_b_C"/>
    <property type="match status" value="1"/>
</dbReference>
<dbReference type="CDD" id="cd00284">
    <property type="entry name" value="Cytochrome_b_N"/>
    <property type="match status" value="1"/>
</dbReference>
<dbReference type="FunFam" id="1.20.810.10:FF:000002">
    <property type="entry name" value="Cytochrome b"/>
    <property type="match status" value="1"/>
</dbReference>
<dbReference type="Gene3D" id="1.20.810.10">
    <property type="entry name" value="Cytochrome Bc1 Complex, Chain C"/>
    <property type="match status" value="1"/>
</dbReference>
<dbReference type="InterPro" id="IPR005798">
    <property type="entry name" value="Cyt_b/b6_C"/>
</dbReference>
<dbReference type="InterPro" id="IPR036150">
    <property type="entry name" value="Cyt_b/b6_C_sf"/>
</dbReference>
<dbReference type="InterPro" id="IPR005797">
    <property type="entry name" value="Cyt_b/b6_N"/>
</dbReference>
<dbReference type="InterPro" id="IPR027387">
    <property type="entry name" value="Cytb/b6-like_sf"/>
</dbReference>
<dbReference type="InterPro" id="IPR030689">
    <property type="entry name" value="Cytochrome_b"/>
</dbReference>
<dbReference type="InterPro" id="IPR048260">
    <property type="entry name" value="Cytochrome_b_C_euk/bac"/>
</dbReference>
<dbReference type="InterPro" id="IPR048259">
    <property type="entry name" value="Cytochrome_b_N_euk/bac"/>
</dbReference>
<dbReference type="InterPro" id="IPR016174">
    <property type="entry name" value="Di-haem_cyt_TM"/>
</dbReference>
<dbReference type="PANTHER" id="PTHR19271">
    <property type="entry name" value="CYTOCHROME B"/>
    <property type="match status" value="1"/>
</dbReference>
<dbReference type="PANTHER" id="PTHR19271:SF16">
    <property type="entry name" value="CYTOCHROME B"/>
    <property type="match status" value="1"/>
</dbReference>
<dbReference type="Pfam" id="PF00032">
    <property type="entry name" value="Cytochrom_B_C"/>
    <property type="match status" value="1"/>
</dbReference>
<dbReference type="Pfam" id="PF00033">
    <property type="entry name" value="Cytochrome_B"/>
    <property type="match status" value="1"/>
</dbReference>
<dbReference type="PIRSF" id="PIRSF038885">
    <property type="entry name" value="COB"/>
    <property type="match status" value="1"/>
</dbReference>
<dbReference type="SUPFAM" id="SSF81648">
    <property type="entry name" value="a domain/subunit of cytochrome bc1 complex (Ubiquinol-cytochrome c reductase)"/>
    <property type="match status" value="1"/>
</dbReference>
<dbReference type="SUPFAM" id="SSF81342">
    <property type="entry name" value="Transmembrane di-heme cytochromes"/>
    <property type="match status" value="1"/>
</dbReference>
<dbReference type="PROSITE" id="PS51003">
    <property type="entry name" value="CYTB_CTER"/>
    <property type="match status" value="1"/>
</dbReference>
<dbReference type="PROSITE" id="PS51002">
    <property type="entry name" value="CYTB_NTER"/>
    <property type="match status" value="1"/>
</dbReference>
<accession>Q9ZY49</accession>
<reference key="1">
    <citation type="journal article" date="1998" name="Proc. R. Soc. B">
        <title>The origin of the Australasian marsupial fauna and the phylogenetic affinities of the enigmatic monito del monte and marsupial mole.</title>
        <authorList>
            <person name="Springer M.S."/>
            <person name="Westerman M."/>
            <person name="Kavanagh J.R."/>
            <person name="Burk A."/>
            <person name="Woodburne M.O."/>
            <person name="Kao D.J."/>
            <person name="Krajewski C."/>
        </authorList>
    </citation>
    <scope>NUCLEOTIDE SEQUENCE [GENOMIC DNA]</scope>
</reference>
<comment type="function">
    <text evidence="2">Component of the ubiquinol-cytochrome c reductase complex (complex III or cytochrome b-c1 complex) that is part of the mitochondrial respiratory chain. The b-c1 complex mediates electron transfer from ubiquinol to cytochrome c. Contributes to the generation of a proton gradient across the mitochondrial membrane that is then used for ATP synthesis.</text>
</comment>
<comment type="cofactor">
    <cofactor evidence="2">
        <name>heme b</name>
        <dbReference type="ChEBI" id="CHEBI:60344"/>
    </cofactor>
    <text evidence="2">Binds 2 heme b groups non-covalently.</text>
</comment>
<comment type="subunit">
    <text evidence="2">The cytochrome bc1 complex contains 11 subunits: 3 respiratory subunits (MT-CYB, CYC1 and UQCRFS1), 2 core proteins (UQCRC1 and UQCRC2) and 6 low-molecular weight proteins (UQCRH/QCR6, UQCRB/QCR7, UQCRQ/QCR8, UQCR10/QCR9, UQCR11/QCR10 and a cleavage product of UQCRFS1). This cytochrome bc1 complex then forms a dimer.</text>
</comment>
<comment type="subcellular location">
    <subcellularLocation>
        <location evidence="2">Mitochondrion inner membrane</location>
        <topology evidence="2">Multi-pass membrane protein</topology>
    </subcellularLocation>
</comment>
<comment type="miscellaneous">
    <text evidence="1">Heme 1 (or BL or b562) is low-potential and absorbs at about 562 nm, and heme 2 (or BH or b566) is high-potential and absorbs at about 566 nm.</text>
</comment>
<comment type="similarity">
    <text evidence="3 4">Belongs to the cytochrome b family.</text>
</comment>
<comment type="caution">
    <text evidence="2">The full-length protein contains only eight transmembrane helices, not nine as predicted by bioinformatics tools.</text>
</comment>
<protein>
    <recommendedName>
        <fullName>Cytochrome b</fullName>
    </recommendedName>
    <alternativeName>
        <fullName>Complex III subunit 3</fullName>
    </alternativeName>
    <alternativeName>
        <fullName>Complex III subunit III</fullName>
    </alternativeName>
    <alternativeName>
        <fullName>Cytochrome b-c1 complex subunit 3</fullName>
    </alternativeName>
    <alternativeName>
        <fullName>Ubiquinol-cytochrome-c reductase complex cytochrome b subunit</fullName>
    </alternativeName>
</protein>
<gene>
    <name type="primary">MT-CYB</name>
    <name type="synonym">COB</name>
    <name type="synonym">CYTB</name>
    <name type="synonym">MTCYB</name>
</gene>